<organism>
    <name type="scientific">Histophilus somni (strain 129Pt)</name>
    <name type="common">Haemophilus somnus</name>
    <dbReference type="NCBI Taxonomy" id="205914"/>
    <lineage>
        <taxon>Bacteria</taxon>
        <taxon>Pseudomonadati</taxon>
        <taxon>Pseudomonadota</taxon>
        <taxon>Gammaproteobacteria</taxon>
        <taxon>Pasteurellales</taxon>
        <taxon>Pasteurellaceae</taxon>
        <taxon>Histophilus</taxon>
    </lineage>
</organism>
<gene>
    <name evidence="1" type="primary">upp</name>
    <name type="ordered locus">HS_1341</name>
</gene>
<keyword id="KW-0021">Allosteric enzyme</keyword>
<keyword id="KW-0328">Glycosyltransferase</keyword>
<keyword id="KW-0342">GTP-binding</keyword>
<keyword id="KW-0460">Magnesium</keyword>
<keyword id="KW-0547">Nucleotide-binding</keyword>
<keyword id="KW-0808">Transferase</keyword>
<accession>Q0I4P2</accession>
<comment type="function">
    <text evidence="1">Catalyzes the conversion of uracil and 5-phospho-alpha-D-ribose 1-diphosphate (PRPP) to UMP and diphosphate.</text>
</comment>
<comment type="catalytic activity">
    <reaction evidence="1">
        <text>UMP + diphosphate = 5-phospho-alpha-D-ribose 1-diphosphate + uracil</text>
        <dbReference type="Rhea" id="RHEA:13017"/>
        <dbReference type="ChEBI" id="CHEBI:17568"/>
        <dbReference type="ChEBI" id="CHEBI:33019"/>
        <dbReference type="ChEBI" id="CHEBI:57865"/>
        <dbReference type="ChEBI" id="CHEBI:58017"/>
        <dbReference type="EC" id="2.4.2.9"/>
    </reaction>
</comment>
<comment type="cofactor">
    <cofactor evidence="1">
        <name>Mg(2+)</name>
        <dbReference type="ChEBI" id="CHEBI:18420"/>
    </cofactor>
    <text evidence="1">Binds 1 Mg(2+) ion per subunit. The magnesium is bound as Mg-PRPP.</text>
</comment>
<comment type="activity regulation">
    <text evidence="1">Allosterically activated by GTP.</text>
</comment>
<comment type="pathway">
    <text evidence="1">Pyrimidine metabolism; UMP biosynthesis via salvage pathway; UMP from uracil: step 1/1.</text>
</comment>
<comment type="similarity">
    <text evidence="1">Belongs to the UPRTase family.</text>
</comment>
<protein>
    <recommendedName>
        <fullName evidence="1">Uracil phosphoribosyltransferase</fullName>
        <ecNumber evidence="1">2.4.2.9</ecNumber>
    </recommendedName>
    <alternativeName>
        <fullName evidence="1">UMP pyrophosphorylase</fullName>
    </alternativeName>
    <alternativeName>
        <fullName evidence="1">UPRTase</fullName>
    </alternativeName>
</protein>
<name>UPP_HISS1</name>
<reference key="1">
    <citation type="journal article" date="2007" name="J. Bacteriol.">
        <title>Complete genome sequence of Haemophilus somnus (Histophilus somni) strain 129Pt and comparison to Haemophilus ducreyi 35000HP and Haemophilus influenzae Rd.</title>
        <authorList>
            <person name="Challacombe J.F."/>
            <person name="Duncan A.J."/>
            <person name="Brettin T.S."/>
            <person name="Bruce D."/>
            <person name="Chertkov O."/>
            <person name="Detter J.C."/>
            <person name="Han C.S."/>
            <person name="Misra M."/>
            <person name="Richardson P."/>
            <person name="Tapia R."/>
            <person name="Thayer N."/>
            <person name="Xie G."/>
            <person name="Inzana T.J."/>
        </authorList>
    </citation>
    <scope>NUCLEOTIDE SEQUENCE [LARGE SCALE GENOMIC DNA]</scope>
    <source>
        <strain>129Pt</strain>
    </source>
</reference>
<feature type="chain" id="PRO_1000053724" description="Uracil phosphoribosyltransferase">
    <location>
        <begin position="1"/>
        <end position="208"/>
    </location>
</feature>
<feature type="binding site" evidence="1">
    <location>
        <position position="78"/>
    </location>
    <ligand>
        <name>5-phospho-alpha-D-ribose 1-diphosphate</name>
        <dbReference type="ChEBI" id="CHEBI:58017"/>
    </ligand>
</feature>
<feature type="binding site" evidence="1">
    <location>
        <position position="103"/>
    </location>
    <ligand>
        <name>5-phospho-alpha-D-ribose 1-diphosphate</name>
        <dbReference type="ChEBI" id="CHEBI:58017"/>
    </ligand>
</feature>
<feature type="binding site" evidence="1">
    <location>
        <begin position="130"/>
        <end position="138"/>
    </location>
    <ligand>
        <name>5-phospho-alpha-D-ribose 1-diphosphate</name>
        <dbReference type="ChEBI" id="CHEBI:58017"/>
    </ligand>
</feature>
<feature type="binding site" evidence="1">
    <location>
        <position position="193"/>
    </location>
    <ligand>
        <name>uracil</name>
        <dbReference type="ChEBI" id="CHEBI:17568"/>
    </ligand>
</feature>
<feature type="binding site" evidence="1">
    <location>
        <begin position="198"/>
        <end position="200"/>
    </location>
    <ligand>
        <name>uracil</name>
        <dbReference type="ChEBI" id="CHEBI:17568"/>
    </ligand>
</feature>
<feature type="binding site" evidence="1">
    <location>
        <position position="199"/>
    </location>
    <ligand>
        <name>5-phospho-alpha-D-ribose 1-diphosphate</name>
        <dbReference type="ChEBI" id="CHEBI:58017"/>
    </ligand>
</feature>
<proteinExistence type="inferred from homology"/>
<sequence length="208" mass="22578">MKIVEVKHPLVKHKLGLMRVADITTKDFRELATEVGSLLTYEATSDLETEKVIIDGWCGAVEIDRIKGKKVTVVPILRAGLGMMDGVLEHVPSARISVVGMYRDEETLEPVPYFQKLASDLDERLAIVVDPMLATGGSMIATINLLKAKGCQHIKVLVLVAAPEGIKALEAVHPDVELYTASIDSHLNEHGYIIPGLGDAGDKIFGTK</sequence>
<evidence type="ECO:0000255" key="1">
    <source>
        <dbReference type="HAMAP-Rule" id="MF_01218"/>
    </source>
</evidence>
<dbReference type="EC" id="2.4.2.9" evidence="1"/>
<dbReference type="EMBL" id="CP000436">
    <property type="protein sequence ID" value="ABI25616.1"/>
    <property type="molecule type" value="Genomic_DNA"/>
</dbReference>
<dbReference type="SMR" id="Q0I4P2"/>
<dbReference type="KEGG" id="hso:HS_1341"/>
<dbReference type="eggNOG" id="COG0035">
    <property type="taxonomic scope" value="Bacteria"/>
</dbReference>
<dbReference type="HOGENOM" id="CLU_067096_2_2_6"/>
<dbReference type="UniPathway" id="UPA00574">
    <property type="reaction ID" value="UER00636"/>
</dbReference>
<dbReference type="GO" id="GO:0005525">
    <property type="term" value="F:GTP binding"/>
    <property type="evidence" value="ECO:0007669"/>
    <property type="project" value="UniProtKB-KW"/>
</dbReference>
<dbReference type="GO" id="GO:0000287">
    <property type="term" value="F:magnesium ion binding"/>
    <property type="evidence" value="ECO:0007669"/>
    <property type="project" value="UniProtKB-UniRule"/>
</dbReference>
<dbReference type="GO" id="GO:0004845">
    <property type="term" value="F:uracil phosphoribosyltransferase activity"/>
    <property type="evidence" value="ECO:0007669"/>
    <property type="project" value="UniProtKB-UniRule"/>
</dbReference>
<dbReference type="GO" id="GO:0044206">
    <property type="term" value="P:UMP salvage"/>
    <property type="evidence" value="ECO:0007669"/>
    <property type="project" value="UniProtKB-UniRule"/>
</dbReference>
<dbReference type="GO" id="GO:0006223">
    <property type="term" value="P:uracil salvage"/>
    <property type="evidence" value="ECO:0007669"/>
    <property type="project" value="InterPro"/>
</dbReference>
<dbReference type="CDD" id="cd06223">
    <property type="entry name" value="PRTases_typeI"/>
    <property type="match status" value="1"/>
</dbReference>
<dbReference type="FunFam" id="3.40.50.2020:FF:000003">
    <property type="entry name" value="Uracil phosphoribosyltransferase"/>
    <property type="match status" value="1"/>
</dbReference>
<dbReference type="Gene3D" id="3.40.50.2020">
    <property type="match status" value="1"/>
</dbReference>
<dbReference type="HAMAP" id="MF_01218_B">
    <property type="entry name" value="Upp_B"/>
    <property type="match status" value="1"/>
</dbReference>
<dbReference type="InterPro" id="IPR000836">
    <property type="entry name" value="PRibTrfase_dom"/>
</dbReference>
<dbReference type="InterPro" id="IPR029057">
    <property type="entry name" value="PRTase-like"/>
</dbReference>
<dbReference type="InterPro" id="IPR034332">
    <property type="entry name" value="Upp_B"/>
</dbReference>
<dbReference type="InterPro" id="IPR050054">
    <property type="entry name" value="UPRTase/APRTase"/>
</dbReference>
<dbReference type="InterPro" id="IPR005765">
    <property type="entry name" value="Ura_phspho_trans"/>
</dbReference>
<dbReference type="NCBIfam" id="NF001097">
    <property type="entry name" value="PRK00129.1"/>
    <property type="match status" value="1"/>
</dbReference>
<dbReference type="NCBIfam" id="TIGR01091">
    <property type="entry name" value="upp"/>
    <property type="match status" value="1"/>
</dbReference>
<dbReference type="PANTHER" id="PTHR32315">
    <property type="entry name" value="ADENINE PHOSPHORIBOSYLTRANSFERASE"/>
    <property type="match status" value="1"/>
</dbReference>
<dbReference type="PANTHER" id="PTHR32315:SF4">
    <property type="entry name" value="URACIL PHOSPHORIBOSYLTRANSFERASE, CHLOROPLASTIC"/>
    <property type="match status" value="1"/>
</dbReference>
<dbReference type="Pfam" id="PF14681">
    <property type="entry name" value="UPRTase"/>
    <property type="match status" value="1"/>
</dbReference>
<dbReference type="SUPFAM" id="SSF53271">
    <property type="entry name" value="PRTase-like"/>
    <property type="match status" value="1"/>
</dbReference>